<reference evidence="13" key="1">
    <citation type="journal article" date="2007" name="Nature">
        <title>Evolution of genes and genomes on the Drosophila phylogeny.</title>
        <authorList>
            <consortium name="Drosophila 12 genomes consortium"/>
        </authorList>
    </citation>
    <scope>NUCLEOTIDE SEQUENCE [LARGE SCALE GENOMIC DNA]</scope>
</reference>
<reference evidence="6 8" key="2">
    <citation type="journal article" date="2009" name="Genetics">
        <title>Molecular population genetics and evolution of Drosophila meiosis genes.</title>
        <authorList>
            <person name="Anderson J.A."/>
            <person name="Gilliland W.D."/>
            <person name="Langley C.H."/>
        </authorList>
    </citation>
    <scope>NUCLEOTIDE SEQUENCE [GENOMIC DNA] OF 74-438</scope>
    <scope>VARIANTS MET-135; GLU-151 DEL; VAL-163; ARG-165; VAL-167; LEU-207; VAL-212; ASN-223; THR-364; PHE-381 AND GLN-392</scope>
    <source>
        <strain evidence="12">C1674</strain>
        <strain evidence="9">Md106</strain>
        <strain evidence="10">Md199</strain>
        <strain evidence="8">NewC</strain>
        <strain evidence="7">Sim</strain>
        <strain evidence="11">W501</strain>
    </source>
</reference>
<evidence type="ECO:0000250" key="1"/>
<evidence type="ECO:0000250" key="2">
    <source>
        <dbReference type="UniProtKB" id="Q7K4M4"/>
    </source>
</evidence>
<evidence type="ECO:0000255" key="3">
    <source>
        <dbReference type="PROSITE-ProRule" id="PRU00042"/>
    </source>
</evidence>
<evidence type="ECO:0000256" key="4">
    <source>
        <dbReference type="SAM" id="MobiDB-lite"/>
    </source>
</evidence>
<evidence type="ECO:0000269" key="5">
    <source>
    </source>
</evidence>
<evidence type="ECO:0000305" key="6"/>
<evidence type="ECO:0000312" key="7">
    <source>
        <dbReference type="EMBL" id="ACI96576.1"/>
    </source>
</evidence>
<evidence type="ECO:0000312" key="8">
    <source>
        <dbReference type="EMBL" id="ACI96577.1"/>
    </source>
</evidence>
<evidence type="ECO:0000312" key="9">
    <source>
        <dbReference type="EMBL" id="ACI96579.1"/>
    </source>
</evidence>
<evidence type="ECO:0000312" key="10">
    <source>
        <dbReference type="EMBL" id="ACI96580.1"/>
    </source>
</evidence>
<evidence type="ECO:0000312" key="11">
    <source>
        <dbReference type="EMBL" id="ACI96581.1"/>
    </source>
</evidence>
<evidence type="ECO:0000312" key="12">
    <source>
        <dbReference type="EMBL" id="ACI96582.1"/>
    </source>
</evidence>
<evidence type="ECO:0000312" key="13">
    <source>
        <dbReference type="EMBL" id="EDX07446.1"/>
    </source>
</evidence>
<comment type="function">
    <text evidence="2">Specifically required in males for proper segregation of autosomal bivalents at meiosis I. Expression is required in the male germ line prior to spermatocyte stage S4. May have a role as a bridging molecule maintaining adhesion to hold autosome bivalents together via heterochromatic connections (By similarity).</text>
</comment>
<comment type="subcellular location">
    <subcellularLocation>
        <location evidence="2">Nucleus</location>
    </subcellularLocation>
    <subcellularLocation>
        <location evidence="1">Chromosome</location>
    </subcellularLocation>
    <text evidence="2">Male meiotic chromosomes.</text>
</comment>
<comment type="miscellaneous">
    <text evidence="2">Drosophilid specific gene duplication generates rgr and tef. Teflon has a function unique to Drosophilids.</text>
</comment>
<comment type="similarity">
    <text evidence="6">Belongs to the Teflon family.</text>
</comment>
<accession>B4QIJ9</accession>
<accession>B6UYC0</accession>
<accession>B6UYC1</accession>
<accession>B6UYC3</accession>
<accession>B6UYC4</accession>
<gene>
    <name evidence="2" type="primary">tef</name>
    <name type="ORF">GD25499</name>
</gene>
<organism>
    <name type="scientific">Drosophila simulans</name>
    <name type="common">Fruit fly</name>
    <dbReference type="NCBI Taxonomy" id="7240"/>
    <lineage>
        <taxon>Eukaryota</taxon>
        <taxon>Metazoa</taxon>
        <taxon>Ecdysozoa</taxon>
        <taxon>Arthropoda</taxon>
        <taxon>Hexapoda</taxon>
        <taxon>Insecta</taxon>
        <taxon>Pterygota</taxon>
        <taxon>Neoptera</taxon>
        <taxon>Endopterygota</taxon>
        <taxon>Diptera</taxon>
        <taxon>Brachycera</taxon>
        <taxon>Muscomorpha</taxon>
        <taxon>Ephydroidea</taxon>
        <taxon>Drosophilidae</taxon>
        <taxon>Drosophila</taxon>
        <taxon>Sophophora</taxon>
    </lineage>
</organism>
<feature type="chain" id="PRO_0000377412" description="Protein teflon">
    <location>
        <begin position="1"/>
        <end position="658"/>
    </location>
</feature>
<feature type="zinc finger region" description="C2H2-type 1" evidence="3">
    <location>
        <begin position="33"/>
        <end position="56"/>
    </location>
</feature>
<feature type="zinc finger region" description="C2H2-type 2" evidence="3">
    <location>
        <begin position="608"/>
        <end position="630"/>
    </location>
</feature>
<feature type="zinc finger region" description="C2H2-type 3" evidence="3">
    <location>
        <begin position="634"/>
        <end position="657"/>
    </location>
</feature>
<feature type="region of interest" description="Disordered" evidence="4">
    <location>
        <begin position="80"/>
        <end position="131"/>
    </location>
</feature>
<feature type="compositionally biased region" description="Polar residues" evidence="4">
    <location>
        <begin position="89"/>
        <end position="104"/>
    </location>
</feature>
<feature type="sequence variant" description="In strain: Md199." evidence="5">
    <original>L</original>
    <variation>M</variation>
    <location>
        <position position="135"/>
    </location>
</feature>
<feature type="sequence variant" description="In strain: Md106, Md199 and NewC." evidence="5">
    <location>
        <position position="151"/>
    </location>
</feature>
<feature type="sequence variant" description="In strain: Md106, Md199 and NewC." evidence="5">
    <original>E</original>
    <variation>V</variation>
    <location>
        <position position="163"/>
    </location>
</feature>
<feature type="sequence variant" description="In strain: Md199, NewC." evidence="5">
    <original>K</original>
    <variation>R</variation>
    <location>
        <position position="165"/>
    </location>
</feature>
<feature type="sequence variant" description="In strain: Md199, NewC." evidence="5">
    <original>A</original>
    <variation>V</variation>
    <location>
        <position position="167"/>
    </location>
</feature>
<feature type="sequence variant" description="In strain: C1674, Md106, Md199, NewC, Sim and W501." evidence="5">
    <original>F</original>
    <variation>L</variation>
    <location>
        <position position="207"/>
    </location>
</feature>
<feature type="sequence variant" description="In strain: Md199." evidence="5">
    <original>I</original>
    <variation>V</variation>
    <location>
        <position position="212"/>
    </location>
</feature>
<feature type="sequence variant" description="In strain: Md199." evidence="5">
    <original>D</original>
    <variation>N</variation>
    <location>
        <position position="223"/>
    </location>
</feature>
<feature type="sequence variant" description="In strain: Md199." evidence="5">
    <original>K</original>
    <variation>T</variation>
    <location>
        <position position="364"/>
    </location>
</feature>
<feature type="sequence variant" description="In strain: Md106, Md199 and NewC." evidence="5">
    <original>L</original>
    <variation>F</variation>
    <location>
        <position position="381"/>
    </location>
</feature>
<feature type="sequence variant" description="In strain: NewC." evidence="5">
    <original>K</original>
    <variation>Q</variation>
    <location>
        <position position="392"/>
    </location>
</feature>
<dbReference type="EMBL" id="CM000362">
    <property type="protein sequence ID" value="EDX07446.1"/>
    <property type="molecule type" value="Genomic_DNA"/>
</dbReference>
<dbReference type="EMBL" id="FJ219518">
    <property type="protein sequence ID" value="ACI96576.1"/>
    <property type="molecule type" value="Genomic_DNA"/>
</dbReference>
<dbReference type="EMBL" id="FJ219519">
    <property type="protein sequence ID" value="ACI96577.1"/>
    <property type="molecule type" value="Genomic_DNA"/>
</dbReference>
<dbReference type="EMBL" id="FJ219521">
    <property type="protein sequence ID" value="ACI96579.1"/>
    <property type="molecule type" value="Genomic_DNA"/>
</dbReference>
<dbReference type="EMBL" id="FJ219522">
    <property type="protein sequence ID" value="ACI96580.1"/>
    <property type="molecule type" value="Genomic_DNA"/>
</dbReference>
<dbReference type="EMBL" id="FJ219523">
    <property type="protein sequence ID" value="ACI96581.1"/>
    <property type="molecule type" value="Genomic_DNA"/>
</dbReference>
<dbReference type="EMBL" id="FJ219524">
    <property type="protein sequence ID" value="ACI96582.1"/>
    <property type="molecule type" value="Genomic_DNA"/>
</dbReference>
<dbReference type="STRING" id="7240.B4QIJ9"/>
<dbReference type="HOGENOM" id="CLU_014432_0_0_1"/>
<dbReference type="OMA" id="TKEHNVY"/>
<dbReference type="OrthoDB" id="8067562at2759"/>
<dbReference type="PhylomeDB" id="B4QIJ9"/>
<dbReference type="Proteomes" id="UP000000304">
    <property type="component" value="Chromosome 2R"/>
</dbReference>
<dbReference type="GO" id="GO:0030849">
    <property type="term" value="C:autosome"/>
    <property type="evidence" value="ECO:0000250"/>
    <property type="project" value="UniProtKB"/>
</dbReference>
<dbReference type="GO" id="GO:0005634">
    <property type="term" value="C:nucleus"/>
    <property type="evidence" value="ECO:0007669"/>
    <property type="project" value="UniProtKB-SubCell"/>
</dbReference>
<dbReference type="GO" id="GO:0008270">
    <property type="term" value="F:zinc ion binding"/>
    <property type="evidence" value="ECO:0007669"/>
    <property type="project" value="UniProtKB-KW"/>
</dbReference>
<dbReference type="GO" id="GO:0051308">
    <property type="term" value="P:male meiosis chromosome separation"/>
    <property type="evidence" value="ECO:0000250"/>
    <property type="project" value="UniProtKB"/>
</dbReference>
<dbReference type="GO" id="GO:0007141">
    <property type="term" value="P:male meiosis I"/>
    <property type="evidence" value="ECO:0007669"/>
    <property type="project" value="EnsemblMetazoa"/>
</dbReference>
<dbReference type="Gene3D" id="3.30.160.60">
    <property type="entry name" value="Classic Zinc Finger"/>
    <property type="match status" value="1"/>
</dbReference>
<dbReference type="InterPro" id="IPR013087">
    <property type="entry name" value="Znf_C2H2_type"/>
</dbReference>
<dbReference type="SMART" id="SM00355">
    <property type="entry name" value="ZnF_C2H2"/>
    <property type="match status" value="3"/>
</dbReference>
<dbReference type="PROSITE" id="PS00028">
    <property type="entry name" value="ZINC_FINGER_C2H2_1"/>
    <property type="match status" value="3"/>
</dbReference>
<dbReference type="PROSITE" id="PS50157">
    <property type="entry name" value="ZINC_FINGER_C2H2_2"/>
    <property type="match status" value="1"/>
</dbReference>
<proteinExistence type="inferred from homology"/>
<name>TEF_DROSI</name>
<protein>
    <recommendedName>
        <fullName evidence="2 8">Protein teflon</fullName>
    </recommendedName>
</protein>
<sequence>MSKFLDMLSGSQCVSLEKCGDVVVSTNDCMIALYCHFCRDLFTQLPEFLRHLQSNHSDVLHFTKEHNVYSVEELLSGEQDKAHEDAQSAGHNSSSGDSRSLMNSEDSRAIDGSEENSDNSPVKPEQIGKQNEINLLAEVTNILLQTNDKEERINDELKPESGEFKGARKKANNESSSLKICDLKSHTIARTSRKRMSLVKNHILRVFDRDLIAKLEMKPLEPDSKLPITEPIQEDNIPGTCFQTPPKPIPSLSQLSVRKSSLTEANHICTKYDTKKTAPTMPKLLNNVPKSILTSQQAQVNSDSSEINETYHISEAASQVTKTTKSFPVQINQIEILQPLKLPKTLITPINEEGVSDQMENSTKNINNAQSLLKENPKKFLKKPSELEIKTKGGPNKFLNVIKSKADPIIVKRVQTTSAKDSTNKIQIRSNDKTKGFASEFNSTKIRKLKMENCVDLKTEDPCDNTNMRLNKMATIGSCEILKAVGLPAITDNAIEAIMLLPDELETMRIRADQFTKIYKKYYSIWNYRKIFPPAKPDFISQKIFALTREVNKTMLCNLANSDIKGIINQISVWHYNIYTQYIELDNISEIARYTLKLFSFLPVSFAYFCKWCDDIFILKKEYLKHLISHQVRFQCTKCIKVFKYKGYYEKHLRNAHP</sequence>
<keyword id="KW-0131">Cell cycle</keyword>
<keyword id="KW-0158">Chromosome</keyword>
<keyword id="KW-0159">Chromosome partition</keyword>
<keyword id="KW-0469">Meiosis</keyword>
<keyword id="KW-0479">Metal-binding</keyword>
<keyword id="KW-0539">Nucleus</keyword>
<keyword id="KW-1185">Reference proteome</keyword>
<keyword id="KW-0677">Repeat</keyword>
<keyword id="KW-0862">Zinc</keyword>
<keyword id="KW-0863">Zinc-finger</keyword>